<gene>
    <name evidence="1" type="primary">aroQ</name>
    <name type="ordered locus">P9301_04071</name>
</gene>
<accession>A3PBA5</accession>
<evidence type="ECO:0000255" key="1">
    <source>
        <dbReference type="HAMAP-Rule" id="MF_00169"/>
    </source>
</evidence>
<organism>
    <name type="scientific">Prochlorococcus marinus (strain MIT 9301)</name>
    <dbReference type="NCBI Taxonomy" id="167546"/>
    <lineage>
        <taxon>Bacteria</taxon>
        <taxon>Bacillati</taxon>
        <taxon>Cyanobacteriota</taxon>
        <taxon>Cyanophyceae</taxon>
        <taxon>Synechococcales</taxon>
        <taxon>Prochlorococcaceae</taxon>
        <taxon>Prochlorococcus</taxon>
    </lineage>
</organism>
<name>AROQ_PROM0</name>
<reference key="1">
    <citation type="journal article" date="2007" name="PLoS Genet.">
        <title>Patterns and implications of gene gain and loss in the evolution of Prochlorococcus.</title>
        <authorList>
            <person name="Kettler G.C."/>
            <person name="Martiny A.C."/>
            <person name="Huang K."/>
            <person name="Zucker J."/>
            <person name="Coleman M.L."/>
            <person name="Rodrigue S."/>
            <person name="Chen F."/>
            <person name="Lapidus A."/>
            <person name="Ferriera S."/>
            <person name="Johnson J."/>
            <person name="Steglich C."/>
            <person name="Church G.M."/>
            <person name="Richardson P."/>
            <person name="Chisholm S.W."/>
        </authorList>
    </citation>
    <scope>NUCLEOTIDE SEQUENCE [LARGE SCALE GENOMIC DNA]</scope>
    <source>
        <strain>MIT 9301</strain>
    </source>
</reference>
<proteinExistence type="inferred from homology"/>
<comment type="function">
    <text evidence="1">Catalyzes a trans-dehydration via an enolate intermediate.</text>
</comment>
<comment type="catalytic activity">
    <reaction evidence="1">
        <text>3-dehydroquinate = 3-dehydroshikimate + H2O</text>
        <dbReference type="Rhea" id="RHEA:21096"/>
        <dbReference type="ChEBI" id="CHEBI:15377"/>
        <dbReference type="ChEBI" id="CHEBI:16630"/>
        <dbReference type="ChEBI" id="CHEBI:32364"/>
        <dbReference type="EC" id="4.2.1.10"/>
    </reaction>
</comment>
<comment type="pathway">
    <text evidence="1">Metabolic intermediate biosynthesis; chorismate biosynthesis; chorismate from D-erythrose 4-phosphate and phosphoenolpyruvate: step 3/7.</text>
</comment>
<comment type="subunit">
    <text evidence="1">Homododecamer.</text>
</comment>
<comment type="similarity">
    <text evidence="1">Belongs to the type-II 3-dehydroquinase family.</text>
</comment>
<protein>
    <recommendedName>
        <fullName evidence="1">3-dehydroquinate dehydratase</fullName>
        <shortName evidence="1">3-dehydroquinase</shortName>
        <ecNumber evidence="1">4.2.1.10</ecNumber>
    </recommendedName>
    <alternativeName>
        <fullName evidence="1">Type II DHQase</fullName>
    </alternativeName>
</protein>
<dbReference type="EC" id="4.2.1.10" evidence="1"/>
<dbReference type="EMBL" id="CP000576">
    <property type="protein sequence ID" value="ABO17030.1"/>
    <property type="molecule type" value="Genomic_DNA"/>
</dbReference>
<dbReference type="SMR" id="A3PBA5"/>
<dbReference type="STRING" id="167546.P9301_04071"/>
<dbReference type="KEGG" id="pmg:P9301_04071"/>
<dbReference type="eggNOG" id="COG0757">
    <property type="taxonomic scope" value="Bacteria"/>
</dbReference>
<dbReference type="HOGENOM" id="CLU_090968_1_0_3"/>
<dbReference type="UniPathway" id="UPA00053">
    <property type="reaction ID" value="UER00086"/>
</dbReference>
<dbReference type="Proteomes" id="UP000001430">
    <property type="component" value="Chromosome"/>
</dbReference>
<dbReference type="GO" id="GO:0003855">
    <property type="term" value="F:3-dehydroquinate dehydratase activity"/>
    <property type="evidence" value="ECO:0007669"/>
    <property type="project" value="UniProtKB-UniRule"/>
</dbReference>
<dbReference type="GO" id="GO:0008652">
    <property type="term" value="P:amino acid biosynthetic process"/>
    <property type="evidence" value="ECO:0007669"/>
    <property type="project" value="UniProtKB-KW"/>
</dbReference>
<dbReference type="GO" id="GO:0009073">
    <property type="term" value="P:aromatic amino acid family biosynthetic process"/>
    <property type="evidence" value="ECO:0007669"/>
    <property type="project" value="UniProtKB-KW"/>
</dbReference>
<dbReference type="GO" id="GO:0009423">
    <property type="term" value="P:chorismate biosynthetic process"/>
    <property type="evidence" value="ECO:0007669"/>
    <property type="project" value="UniProtKB-UniRule"/>
</dbReference>
<dbReference type="GO" id="GO:0019631">
    <property type="term" value="P:quinate catabolic process"/>
    <property type="evidence" value="ECO:0007669"/>
    <property type="project" value="TreeGrafter"/>
</dbReference>
<dbReference type="CDD" id="cd00466">
    <property type="entry name" value="DHQase_II"/>
    <property type="match status" value="1"/>
</dbReference>
<dbReference type="Gene3D" id="3.40.50.9100">
    <property type="entry name" value="Dehydroquinase, class II"/>
    <property type="match status" value="1"/>
</dbReference>
<dbReference type="HAMAP" id="MF_00169">
    <property type="entry name" value="AroQ"/>
    <property type="match status" value="1"/>
</dbReference>
<dbReference type="InterPro" id="IPR001874">
    <property type="entry name" value="DHquinase_II"/>
</dbReference>
<dbReference type="InterPro" id="IPR018509">
    <property type="entry name" value="DHquinase_II_CS"/>
</dbReference>
<dbReference type="InterPro" id="IPR036441">
    <property type="entry name" value="DHquinase_II_sf"/>
</dbReference>
<dbReference type="NCBIfam" id="TIGR01088">
    <property type="entry name" value="aroQ"/>
    <property type="match status" value="1"/>
</dbReference>
<dbReference type="NCBIfam" id="NF003804">
    <property type="entry name" value="PRK05395.1-1"/>
    <property type="match status" value="1"/>
</dbReference>
<dbReference type="NCBIfam" id="NF003805">
    <property type="entry name" value="PRK05395.1-2"/>
    <property type="match status" value="1"/>
</dbReference>
<dbReference type="NCBIfam" id="NF003806">
    <property type="entry name" value="PRK05395.1-3"/>
    <property type="match status" value="1"/>
</dbReference>
<dbReference type="NCBIfam" id="NF003807">
    <property type="entry name" value="PRK05395.1-4"/>
    <property type="match status" value="1"/>
</dbReference>
<dbReference type="PANTHER" id="PTHR21272">
    <property type="entry name" value="CATABOLIC 3-DEHYDROQUINASE"/>
    <property type="match status" value="1"/>
</dbReference>
<dbReference type="PANTHER" id="PTHR21272:SF3">
    <property type="entry name" value="CATABOLIC 3-DEHYDROQUINASE"/>
    <property type="match status" value="1"/>
</dbReference>
<dbReference type="Pfam" id="PF01220">
    <property type="entry name" value="DHquinase_II"/>
    <property type="match status" value="1"/>
</dbReference>
<dbReference type="PIRSF" id="PIRSF001399">
    <property type="entry name" value="DHquinase_II"/>
    <property type="match status" value="1"/>
</dbReference>
<dbReference type="SUPFAM" id="SSF52304">
    <property type="entry name" value="Type II 3-dehydroquinate dehydratase"/>
    <property type="match status" value="1"/>
</dbReference>
<dbReference type="PROSITE" id="PS01029">
    <property type="entry name" value="DEHYDROQUINASE_II"/>
    <property type="match status" value="1"/>
</dbReference>
<keyword id="KW-0028">Amino-acid biosynthesis</keyword>
<keyword id="KW-0057">Aromatic amino acid biosynthesis</keyword>
<keyword id="KW-0456">Lyase</keyword>
<keyword id="KW-1185">Reference proteome</keyword>
<feature type="chain" id="PRO_1000077053" description="3-dehydroquinate dehydratase">
    <location>
        <begin position="1"/>
        <end position="147"/>
    </location>
</feature>
<feature type="active site" description="Proton acceptor" evidence="1">
    <location>
        <position position="23"/>
    </location>
</feature>
<feature type="active site" description="Proton donor" evidence="1">
    <location>
        <position position="100"/>
    </location>
</feature>
<feature type="binding site" evidence="1">
    <location>
        <position position="74"/>
    </location>
    <ligand>
        <name>substrate</name>
    </ligand>
</feature>
<feature type="binding site" evidence="1">
    <location>
        <position position="80"/>
    </location>
    <ligand>
        <name>substrate</name>
    </ligand>
</feature>
<feature type="binding site" evidence="1">
    <location>
        <position position="87"/>
    </location>
    <ligand>
        <name>substrate</name>
    </ligand>
</feature>
<feature type="binding site" evidence="1">
    <location>
        <begin position="101"/>
        <end position="102"/>
    </location>
    <ligand>
        <name>substrate</name>
    </ligand>
</feature>
<feature type="binding site" evidence="1">
    <location>
        <position position="111"/>
    </location>
    <ligand>
        <name>substrate</name>
    </ligand>
</feature>
<feature type="site" description="Transition state stabilizer" evidence="1">
    <location>
        <position position="18"/>
    </location>
</feature>
<sequence length="147" mass="16215">MMNILLINGPNLNLLGTREPEIYGNKTLSDIEKDLTKVAKEKSINLECFQSNHEGEIVDKIQESVKSIQGILINAGAFTHTSISIRDALIGSKIPFVELHISNIFSREDFRKESFLTDKAIGIISGFGISSYSLALEGIIGYLSIKD</sequence>